<dbReference type="EC" id="3.5.1.-"/>
<dbReference type="EMBL" id="AE015929">
    <property type="protein sequence ID" value="AAO04912.1"/>
    <property type="molecule type" value="Genomic_DNA"/>
</dbReference>
<dbReference type="RefSeq" id="NP_764868.1">
    <property type="nucleotide sequence ID" value="NC_004461.1"/>
</dbReference>
<dbReference type="RefSeq" id="WP_002468514.1">
    <property type="nucleotide sequence ID" value="NZ_WBME01000059.1"/>
</dbReference>
<dbReference type="SMR" id="Q8CP02"/>
<dbReference type="KEGG" id="sep:SE_1313"/>
<dbReference type="PATRIC" id="fig|176280.10.peg.1282"/>
<dbReference type="eggNOG" id="COG0860">
    <property type="taxonomic scope" value="Bacteria"/>
</dbReference>
<dbReference type="HOGENOM" id="CLU_014322_1_1_9"/>
<dbReference type="OrthoDB" id="9806267at2"/>
<dbReference type="Proteomes" id="UP000001411">
    <property type="component" value="Chromosome"/>
</dbReference>
<dbReference type="GO" id="GO:0005576">
    <property type="term" value="C:extracellular region"/>
    <property type="evidence" value="ECO:0007669"/>
    <property type="project" value="UniProtKB-SubCell"/>
</dbReference>
<dbReference type="GO" id="GO:0030288">
    <property type="term" value="C:outer membrane-bounded periplasmic space"/>
    <property type="evidence" value="ECO:0007669"/>
    <property type="project" value="TreeGrafter"/>
</dbReference>
<dbReference type="GO" id="GO:0008745">
    <property type="term" value="F:N-acetylmuramoyl-L-alanine amidase activity"/>
    <property type="evidence" value="ECO:0007669"/>
    <property type="project" value="InterPro"/>
</dbReference>
<dbReference type="GO" id="GO:0071555">
    <property type="term" value="P:cell wall organization"/>
    <property type="evidence" value="ECO:0007669"/>
    <property type="project" value="UniProtKB-KW"/>
</dbReference>
<dbReference type="GO" id="GO:0009253">
    <property type="term" value="P:peptidoglycan catabolic process"/>
    <property type="evidence" value="ECO:0007669"/>
    <property type="project" value="InterPro"/>
</dbReference>
<dbReference type="CDD" id="cd02696">
    <property type="entry name" value="MurNAc-LAA"/>
    <property type="match status" value="1"/>
</dbReference>
<dbReference type="Gene3D" id="2.30.30.40">
    <property type="entry name" value="SH3 Domains"/>
    <property type="match status" value="1"/>
</dbReference>
<dbReference type="Gene3D" id="3.40.630.40">
    <property type="entry name" value="Zn-dependent exopeptidases"/>
    <property type="match status" value="1"/>
</dbReference>
<dbReference type="InterPro" id="IPR017273">
    <property type="entry name" value="LytH"/>
</dbReference>
<dbReference type="InterPro" id="IPR002508">
    <property type="entry name" value="MurNAc-LAA_cat"/>
</dbReference>
<dbReference type="InterPro" id="IPR050695">
    <property type="entry name" value="N-acetylmuramoyl_amidase_3"/>
</dbReference>
<dbReference type="InterPro" id="IPR003646">
    <property type="entry name" value="SH3-like_bac-type"/>
</dbReference>
<dbReference type="PANTHER" id="PTHR30404:SF7">
    <property type="entry name" value="CELL WALL AMIDASE LYTH-RELATED"/>
    <property type="match status" value="1"/>
</dbReference>
<dbReference type="PANTHER" id="PTHR30404">
    <property type="entry name" value="N-ACETYLMURAMOYL-L-ALANINE AMIDASE"/>
    <property type="match status" value="1"/>
</dbReference>
<dbReference type="Pfam" id="PF01520">
    <property type="entry name" value="Amidase_3"/>
    <property type="match status" value="1"/>
</dbReference>
<dbReference type="Pfam" id="PF08239">
    <property type="entry name" value="SH3_3"/>
    <property type="match status" value="1"/>
</dbReference>
<dbReference type="PIRSF" id="PIRSF037730">
    <property type="entry name" value="CWA_LytH_prd"/>
    <property type="match status" value="1"/>
</dbReference>
<dbReference type="SMART" id="SM00646">
    <property type="entry name" value="Ami_3"/>
    <property type="match status" value="1"/>
</dbReference>
<dbReference type="SMART" id="SM00287">
    <property type="entry name" value="SH3b"/>
    <property type="match status" value="1"/>
</dbReference>
<dbReference type="SUPFAM" id="SSF53187">
    <property type="entry name" value="Zn-dependent exopeptidases"/>
    <property type="match status" value="1"/>
</dbReference>
<dbReference type="PROSITE" id="PS51781">
    <property type="entry name" value="SH3B"/>
    <property type="match status" value="1"/>
</dbReference>
<accession>Q8CP02</accession>
<reference key="1">
    <citation type="journal article" date="2003" name="Mol. Microbiol.">
        <title>Genome-based analysis of virulence genes in a non-biofilm-forming Staphylococcus epidermidis strain (ATCC 12228).</title>
        <authorList>
            <person name="Zhang Y.-Q."/>
            <person name="Ren S.-X."/>
            <person name="Li H.-L."/>
            <person name="Wang Y.-X."/>
            <person name="Fu G."/>
            <person name="Yang J."/>
            <person name="Qin Z.-Q."/>
            <person name="Miao Y.-G."/>
            <person name="Wang W.-Y."/>
            <person name="Chen R.-S."/>
            <person name="Shen Y."/>
            <person name="Chen Z."/>
            <person name="Yuan Z.-H."/>
            <person name="Zhao G.-P."/>
            <person name="Qu D."/>
            <person name="Danchin A."/>
            <person name="Wen Y.-M."/>
        </authorList>
    </citation>
    <scope>NUCLEOTIDE SEQUENCE [LARGE SCALE GENOMIC DNA]</scope>
    <source>
        <strain>ATCC 12228 / FDA PCI 1200</strain>
    </source>
</reference>
<protein>
    <recommendedName>
        <fullName>Probable cell wall amidase LytH</fullName>
        <ecNumber>3.5.1.-</ecNumber>
    </recommendedName>
</protein>
<proteinExistence type="inferred from homology"/>
<gene>
    <name type="primary">lytH</name>
    <name type="ordered locus">SE_1313</name>
</gene>
<evidence type="ECO:0000250" key="1"/>
<evidence type="ECO:0000255" key="2"/>
<evidence type="ECO:0000255" key="3">
    <source>
        <dbReference type="PROSITE-ProRule" id="PRU01117"/>
    </source>
</evidence>
<evidence type="ECO:0000256" key="4">
    <source>
        <dbReference type="SAM" id="MobiDB-lite"/>
    </source>
</evidence>
<evidence type="ECO:0000305" key="5"/>
<keyword id="KW-0961">Cell wall biogenesis/degradation</keyword>
<keyword id="KW-0378">Hydrolase</keyword>
<keyword id="KW-0964">Secreted</keyword>
<keyword id="KW-0732">Signal</keyword>
<comment type="function">
    <text evidence="1">Probably involved in cell-wall metabolism.</text>
</comment>
<comment type="subcellular location">
    <subcellularLocation>
        <location evidence="5">Secreted</location>
    </subcellularLocation>
</comment>
<comment type="similarity">
    <text evidence="5">Belongs to the N-acetylmuramoyl-L-alanine amidase 3 family.</text>
</comment>
<feature type="signal peptide" evidence="2">
    <location>
        <begin position="1"/>
        <end position="40"/>
    </location>
</feature>
<feature type="chain" id="PRO_0000226287" description="Probable cell wall amidase LytH">
    <location>
        <begin position="41"/>
        <end position="291"/>
    </location>
</feature>
<feature type="domain" description="SH3b" evidence="3">
    <location>
        <begin position="41"/>
        <end position="105"/>
    </location>
</feature>
<feature type="domain" description="MurNAc-LAA" evidence="2">
    <location>
        <begin position="122"/>
        <end position="286"/>
    </location>
</feature>
<feature type="region of interest" description="Disordered" evidence="4">
    <location>
        <begin position="123"/>
        <end position="147"/>
    </location>
</feature>
<feature type="compositionally biased region" description="Polar residues" evidence="4">
    <location>
        <begin position="133"/>
        <end position="142"/>
    </location>
</feature>
<sequence>MKKIDSWLTKHGLKNRLTLVVIVIFIIFLILLFMFVNLSDEDTGQITITENAELRTGPNAAYPVIYKIEKGESFKKIDRKGKWIEVQNHAGTEKGWVAGWHTNLNIPADQSLSSNPLKGKTIVLDPGHGGSDQGASSSTPSKSLEKNYTLKTAKELKKLLNKEGAHVKMTRSNDKYVSLDDRNIKGDAFISIHNDALDSSNANGVTVYWFKDKQESLAQTLNSAIQKKALLTNRGSRQQNYQVLRQTDIPAVLLELGYISNPTDESMINDQLHRQVVEQAIVDGLKQYFSS</sequence>
<name>LYTH_STAES</name>
<organism>
    <name type="scientific">Staphylococcus epidermidis (strain ATCC 12228 / FDA PCI 1200)</name>
    <dbReference type="NCBI Taxonomy" id="176280"/>
    <lineage>
        <taxon>Bacteria</taxon>
        <taxon>Bacillati</taxon>
        <taxon>Bacillota</taxon>
        <taxon>Bacilli</taxon>
        <taxon>Bacillales</taxon>
        <taxon>Staphylococcaceae</taxon>
        <taxon>Staphylococcus</taxon>
    </lineage>
</organism>